<proteinExistence type="evidence at transcript level"/>
<name>DUOX2_RAT</name>
<comment type="function">
    <text>Generates hydrogen peroxide which is required for the activity of thyroid peroxidase/TPO and lactoperoxidase/LPO. Plays a role in thyroid hormones synthesis and lactoperoxidase-mediated antimicrobial defense at the surface of mucosa. May have its own peroxidase activity through its N-terminal peroxidase-like domain.</text>
</comment>
<comment type="catalytic activity">
    <reaction>
        <text>NADH + O2 + H(+) = H2O2 + NAD(+)</text>
        <dbReference type="Rhea" id="RHEA:11264"/>
        <dbReference type="ChEBI" id="CHEBI:15378"/>
        <dbReference type="ChEBI" id="CHEBI:15379"/>
        <dbReference type="ChEBI" id="CHEBI:16240"/>
        <dbReference type="ChEBI" id="CHEBI:57540"/>
        <dbReference type="ChEBI" id="CHEBI:57945"/>
        <dbReference type="EC" id="1.6.3.1"/>
    </reaction>
</comment>
<comment type="catalytic activity">
    <reaction>
        <text>NADPH + O2 + H(+) = H2O2 + NADP(+)</text>
        <dbReference type="Rhea" id="RHEA:11260"/>
        <dbReference type="ChEBI" id="CHEBI:15378"/>
        <dbReference type="ChEBI" id="CHEBI:15379"/>
        <dbReference type="ChEBI" id="CHEBI:16240"/>
        <dbReference type="ChEBI" id="CHEBI:57783"/>
        <dbReference type="ChEBI" id="CHEBI:58349"/>
        <dbReference type="EC" id="1.6.3.1"/>
    </reaction>
</comment>
<comment type="activity regulation">
    <text evidence="1">The NADPH oxidase activity is calcium-dependent. Peroxidase activity is inhibited by aminobenzohydrazide (By similarity).</text>
</comment>
<comment type="pathway">
    <text>Hormone biosynthesis; thyroid hormone biosynthesis.</text>
</comment>
<comment type="subunit">
    <text evidence="1">Heterodimer with DUOXA2; disulfide-linked. Interacts with TXNDC11, TPO and CYBA.</text>
</comment>
<comment type="subcellular location">
    <subcellularLocation>
        <location evidence="2">Apical cell membrane</location>
        <topology evidence="2">Multi-pass membrane protein</topology>
    </subcellularLocation>
    <subcellularLocation>
        <location evidence="2">Cell junction</location>
    </subcellularLocation>
    <text evidence="2">Localizes to the apical membrane of epithelial cells. Localizes on internal membrane structures under resting conditions, translocates to the plasma membrane and cell-cell junctions upon challenge with enteric pathogens.</text>
</comment>
<comment type="alternative products">
    <event type="alternative splicing"/>
    <isoform>
        <id>Q9ES45-1</id>
        <name>1</name>
        <sequence type="displayed"/>
    </isoform>
    <isoform>
        <id>Q9ES45-2</id>
        <name>2</name>
        <name>short</name>
        <sequence type="described" ref="VSP_017264"/>
    </isoform>
</comment>
<comment type="tissue specificity">
    <text evidence="7 9">Expressed in colon, duodenum, rectum and thyroid.</text>
</comment>
<comment type="induction">
    <text evidence="7 8">By forskolin, thyrotropin and insulin. Down-regulated by the antithyroid drug methimazole.</text>
</comment>
<comment type="PTM">
    <text evidence="1">N-glycosylated.</text>
</comment>
<comment type="miscellaneous">
    <molecule>Isoform 2</molecule>
    <text evidence="11">There is no evidence for the expression of the corresponding protein in vitro.</text>
</comment>
<comment type="similarity">
    <text evidence="11">In the N-terminal section; belongs to the peroxidase family.</text>
</comment>
<comment type="sequence caution" evidence="11">
    <conflict type="erroneous initiation">
        <sequence resource="EMBL-CDS" id="AAN39340"/>
    </conflict>
</comment>
<gene>
    <name type="primary">Duox2</name>
    <name type="synonym">Lnox2</name>
    <name type="synonym">Thox2</name>
</gene>
<organism>
    <name type="scientific">Rattus norvegicus</name>
    <name type="common">Rat</name>
    <dbReference type="NCBI Taxonomy" id="10116"/>
    <lineage>
        <taxon>Eukaryota</taxon>
        <taxon>Metazoa</taxon>
        <taxon>Chordata</taxon>
        <taxon>Craniata</taxon>
        <taxon>Vertebrata</taxon>
        <taxon>Euteleostomi</taxon>
        <taxon>Mammalia</taxon>
        <taxon>Eutheria</taxon>
        <taxon>Euarchontoglires</taxon>
        <taxon>Glires</taxon>
        <taxon>Rodentia</taxon>
        <taxon>Myomorpha</taxon>
        <taxon>Muroidea</taxon>
        <taxon>Muridae</taxon>
        <taxon>Murinae</taxon>
        <taxon>Rattus</taxon>
    </lineage>
</organism>
<protein>
    <recommendedName>
        <fullName>Dual oxidase 2</fullName>
        <ecNumber>1.11.1.-</ecNumber>
        <ecNumber>1.6.3.1</ecNumber>
    </recommendedName>
    <alternativeName>
        <fullName>Large NOX 2</fullName>
    </alternativeName>
    <alternativeName>
        <fullName>Long NOX 2</fullName>
    </alternativeName>
    <alternativeName>
        <fullName>NADH/NADPH thyroid oxidase THOX2</fullName>
    </alternativeName>
    <alternativeName>
        <fullName>Thyroid oxidase 2</fullName>
    </alternativeName>
</protein>
<evidence type="ECO:0000250" key="1"/>
<evidence type="ECO:0000250" key="2">
    <source>
        <dbReference type="UniProtKB" id="Q9NRD8"/>
    </source>
</evidence>
<evidence type="ECO:0000255" key="3"/>
<evidence type="ECO:0000255" key="4">
    <source>
        <dbReference type="PROSITE-ProRule" id="PRU00114"/>
    </source>
</evidence>
<evidence type="ECO:0000255" key="5">
    <source>
        <dbReference type="PROSITE-ProRule" id="PRU00448"/>
    </source>
</evidence>
<evidence type="ECO:0000255" key="6">
    <source>
        <dbReference type="PROSITE-ProRule" id="PRU00716"/>
    </source>
</evidence>
<evidence type="ECO:0000269" key="7">
    <source>
    </source>
</evidence>
<evidence type="ECO:0000269" key="8">
    <source>
    </source>
</evidence>
<evidence type="ECO:0000269" key="9">
    <source>
    </source>
</evidence>
<evidence type="ECO:0000303" key="10">
    <source>
    </source>
</evidence>
<evidence type="ECO:0000305" key="11"/>
<reference key="1">
    <citation type="journal article" date="2000" name="Biochem. Biophys. Res. Commun.">
        <title>Thyroid oxidase (THOX2) gene expression in the rat thyroid cell line FRTL-5.</title>
        <authorList>
            <person name="Dupuy C."/>
            <person name="Pomerance M."/>
            <person name="Ohayon R."/>
            <person name="Noel-Hudson M.-S."/>
            <person name="Deme D."/>
            <person name="Chaaraoui M."/>
            <person name="Francon J."/>
            <person name="Virion A."/>
        </authorList>
    </citation>
    <scope>NUCLEOTIDE SEQUENCE [MRNA] (ISOFORM 1)</scope>
    <scope>TISSUE SPECIFICITY</scope>
    <scope>INDUCTION</scope>
    <source>
        <tissue>Thyroid</tissue>
    </source>
</reference>
<reference key="2">
    <citation type="journal article" date="2003" name="Endocrinology">
        <title>Identification of a truncated dual oxidase 2 (DUOX2) messenger ribonucleic acid (mRNA) in two rat thyroid cell lines. Insulin and forskolin regulation of DUOX2 mRNA levels in FRTL-5 cells and porcine thyrocytes.</title>
        <authorList>
            <person name="Morand S."/>
            <person name="Dos Santos O.F."/>
            <person name="Ohayon R."/>
            <person name="Kaniewski J."/>
            <person name="Noel-Hudson M.-S."/>
            <person name="Virion A."/>
            <person name="Dupuy C."/>
        </authorList>
    </citation>
    <scope>NUCLEOTIDE SEQUENCE [MRNA] (ISOFORM 2)</scope>
    <scope>INDUCTION</scope>
    <source>
        <strain>Fischer</strain>
    </source>
</reference>
<reference key="3">
    <citation type="journal article" date="2003" name="FASEB J.">
        <title>Dual oxidases represent novel hydrogen peroxide sources supporting mucosal surface host defense.</title>
        <authorList>
            <person name="Geiszt M."/>
            <person name="Witta J."/>
            <person name="Baffi J."/>
            <person name="Lekstrom K."/>
            <person name="Leto T.L."/>
        </authorList>
    </citation>
    <scope>TISSUE SPECIFICITY</scope>
</reference>
<keyword id="KW-0025">Alternative splicing</keyword>
<keyword id="KW-0106">Calcium</keyword>
<keyword id="KW-0965">Cell junction</keyword>
<keyword id="KW-1003">Cell membrane</keyword>
<keyword id="KW-1015">Disulfide bond</keyword>
<keyword id="KW-0274">FAD</keyword>
<keyword id="KW-0285">Flavoprotein</keyword>
<keyword id="KW-0325">Glycoprotein</keyword>
<keyword id="KW-0376">Hydrogen peroxide</keyword>
<keyword id="KW-0472">Membrane</keyword>
<keyword id="KW-0479">Metal-binding</keyword>
<keyword id="KW-0521">NADP</keyword>
<keyword id="KW-0560">Oxidoreductase</keyword>
<keyword id="KW-0575">Peroxidase</keyword>
<keyword id="KW-1185">Reference proteome</keyword>
<keyword id="KW-0677">Repeat</keyword>
<keyword id="KW-0732">Signal</keyword>
<keyword id="KW-0893">Thyroid hormones biosynthesis</keyword>
<keyword id="KW-0812">Transmembrane</keyword>
<keyword id="KW-1133">Transmembrane helix</keyword>
<sequence>MLPTSLKTLVLLGALLTGPLGPAGGQDAPSLPREVQRYDGWFNNLKYHQRGAAGSQLRRLVPANYADGVYQALQEPLLPNARLLSDAVSKGKAGLPSAHNRTVLGLFFGYHVLSDLVSVETPGCPAEFLNIYIPRGDPVFDPDKRGNVVLPFQRSRWDRSTGQSPSNPRDLTNQVTGWLDGSAIYGSSHSWSDTLRSFSGGQLASGPDPAFPRNSQNSLLMWMAPDPATGQGGPQGLYAFGAQRGNREPFLQALGLLWFRYHNLCAKRLAQEHPHWGDEELFQHARKRVIATYQNIALYQWLPSFLQKTPPEYSGYRPFMDPSISPEFVAASEQFLSTMVPPGVYMRNSSCHFREFPKEGSSSSPALRVCNNYWIRENPSLKTAQDVDQLLLGMASQISELEDRIVIEDLRDYWPGPDRYSRTDYVASSIQSGRDMGLPSYSQALQALGLEPPKNWSALNPKVDPQVLEATAALYNQDLSRLELFLGGLLESHGDPGPLFSNIILDQFVRLRDGDRYWFENTRNGLFSKEEIAEIRNTTLRDVLVAVSNVDPSALQPNVFFWQEGAPCPQPQQLTTEGLPQCVPVTVIDYFEGSGAGYGVTLLAVCCFPVVSLIIAWVVARFRNRERKMLLKKGKESLKKQTASDGVPAMEWPGPKESSYPVTVQLLPDRSLKVLDKRLTVLRTIQLQPTQQVNLILSSSHGRRTLLLKIPKEYDLVLMFNSEEDRDAFVQLLQDLCVCSTPGLRIAEMDEKELLRKAVTKQQRAGILEIFFRQLFAQVLDINQADAGTLPLDSSQQVREALTCELSRAEFADSLGLKPQDMFVESMFSLADKDGNGYISFREFLDILVVFMKGSPQDKSRLMFTMYDLDGNGFLSKEEFFTMMRSFIEISNNCLSKDQLAEVVESMFRESGFQDKEELTWEDFHFMLRDHDSDLRFTQLCVKGGAGGTGDIFKQSNACRVSFLTRTPGNRVMAPSPRLYTEALQEKMQRGFLAQKLKQFKRFVENYRRHIVCVTIFSAICAGLFADRAYYYGFASPPTDIEETTYVGIILSRGTAASISFMFSYILLTMCRNLITFLRETFLNRYIPFDAAVDFHRWIAMAAVVLAVVHSLGHAVNVYIFSVSPLSLMTCVFPSVFVNDGSKLPPKYYWWFFETVPGMTGVLLLLVLAIMYVFASHHFRRHSFRGFWLTHHLYVVLYALIIIHGSYALIQLPSFHIYFLVPAIIYVGDKLVSLSRKKVEISVVKVELLPSGVTYLQFQRPKTFEYKSGQWVRIACLSLGTNEYHPFTLTSAPHEDTLSLHIRAVGPWTTRLREIYSPPVGGTSARYPKLYLDGPFGEGHQEWHKFEVSVLVGGGIGVTPFASILKDLVFKSSMGTQMLCKKIYFIWVTRTQRQFEWLADIIREVEENGSRDLVSVHIYITQLAEKFDLRTTMLYICERHFQKVLNRSLFTGLRSVTHFGRPPFELFLDSLQEVHPQVHKIGVFSCGPPGMTKNVEKACQLINRQDRAHFVHHYENF</sequence>
<feature type="signal peptide" evidence="3">
    <location>
        <begin position="1"/>
        <end position="25"/>
    </location>
</feature>
<feature type="chain" id="PRO_0000223351" description="Dual oxidase 2">
    <location>
        <begin position="26"/>
        <end position="1517"/>
    </location>
</feature>
<feature type="topological domain" description="Extracellular" evidence="3">
    <location>
        <begin position="26"/>
        <end position="599"/>
    </location>
</feature>
<feature type="transmembrane region" description="Helical" evidence="3">
    <location>
        <begin position="600"/>
        <end position="620"/>
    </location>
</feature>
<feature type="topological domain" description="Cytoplasmic" evidence="3">
    <location>
        <begin position="621"/>
        <end position="1010"/>
    </location>
</feature>
<feature type="transmembrane region" description="Helical" evidence="3">
    <location>
        <begin position="1011"/>
        <end position="1031"/>
    </location>
</feature>
<feature type="topological domain" description="Extracellular" evidence="3">
    <location>
        <begin position="1032"/>
        <end position="1046"/>
    </location>
</feature>
<feature type="transmembrane region" description="Helical" evidence="3">
    <location>
        <begin position="1047"/>
        <end position="1067"/>
    </location>
</feature>
<feature type="topological domain" description="Cytoplasmic" evidence="3">
    <location>
        <begin position="1068"/>
        <end position="1100"/>
    </location>
</feature>
<feature type="transmembrane region" description="Helical" evidence="3">
    <location>
        <begin position="1101"/>
        <end position="1121"/>
    </location>
</feature>
<feature type="topological domain" description="Extracellular" evidence="3">
    <location>
        <begin position="1122"/>
        <end position="1154"/>
    </location>
</feature>
<feature type="transmembrane region" description="Helical" evidence="3">
    <location>
        <begin position="1155"/>
        <end position="1175"/>
    </location>
</feature>
<feature type="topological domain" description="Cytoplasmic" evidence="3">
    <location>
        <begin position="1176"/>
        <end position="1185"/>
    </location>
</feature>
<feature type="transmembrane region" description="Helical" evidence="3">
    <location>
        <begin position="1186"/>
        <end position="1206"/>
    </location>
</feature>
<feature type="topological domain" description="Extracellular" evidence="3">
    <location>
        <position position="1207"/>
    </location>
</feature>
<feature type="transmembrane region" description="Helical" evidence="3">
    <location>
        <begin position="1208"/>
        <end position="1228"/>
    </location>
</feature>
<feature type="topological domain" description="Cytoplasmic" evidence="3">
    <location>
        <begin position="1229"/>
        <end position="1517"/>
    </location>
</feature>
<feature type="domain" description="EF-hand 1" evidence="5">
    <location>
        <begin position="819"/>
        <end position="854"/>
    </location>
</feature>
<feature type="domain" description="EF-hand 2" evidence="5">
    <location>
        <begin position="855"/>
        <end position="890"/>
    </location>
</feature>
<feature type="domain" description="EF-hand 3" evidence="5">
    <location>
        <begin position="899"/>
        <end position="934"/>
    </location>
</feature>
<feature type="domain" description="Ferric oxidoreductase">
    <location>
        <begin position="1053"/>
        <end position="1235"/>
    </location>
</feature>
<feature type="domain" description="FAD-binding FR-type" evidence="6">
    <location>
        <begin position="1236"/>
        <end position="1342"/>
    </location>
</feature>
<feature type="region of interest" description="Peroxidase-like; mediates peroxidase activity" evidence="1">
    <location>
        <begin position="30"/>
        <end position="596"/>
    </location>
</feature>
<feature type="region of interest" description="Interaction with TXNDC11" evidence="1">
    <location>
        <begin position="960"/>
        <end position="1214"/>
    </location>
</feature>
<feature type="binding site" evidence="5">
    <location>
        <position position="832"/>
    </location>
    <ligand>
        <name>Ca(2+)</name>
        <dbReference type="ChEBI" id="CHEBI:29108"/>
        <label>1</label>
    </ligand>
</feature>
<feature type="binding site" evidence="5">
    <location>
        <position position="834"/>
    </location>
    <ligand>
        <name>Ca(2+)</name>
        <dbReference type="ChEBI" id="CHEBI:29108"/>
        <label>1</label>
    </ligand>
</feature>
<feature type="binding site" evidence="5">
    <location>
        <position position="836"/>
    </location>
    <ligand>
        <name>Ca(2+)</name>
        <dbReference type="ChEBI" id="CHEBI:29108"/>
        <label>1</label>
    </ligand>
</feature>
<feature type="binding site" evidence="5">
    <location>
        <position position="838"/>
    </location>
    <ligand>
        <name>Ca(2+)</name>
        <dbReference type="ChEBI" id="CHEBI:29108"/>
        <label>1</label>
    </ligand>
</feature>
<feature type="binding site" evidence="5">
    <location>
        <position position="843"/>
    </location>
    <ligand>
        <name>Ca(2+)</name>
        <dbReference type="ChEBI" id="CHEBI:29108"/>
        <label>1</label>
    </ligand>
</feature>
<feature type="binding site" evidence="5">
    <location>
        <position position="868"/>
    </location>
    <ligand>
        <name>Ca(2+)</name>
        <dbReference type="ChEBI" id="CHEBI:29108"/>
        <label>2</label>
    </ligand>
</feature>
<feature type="binding site" evidence="5">
    <location>
        <position position="870"/>
    </location>
    <ligand>
        <name>Ca(2+)</name>
        <dbReference type="ChEBI" id="CHEBI:29108"/>
        <label>2</label>
    </ligand>
</feature>
<feature type="binding site" evidence="5">
    <location>
        <position position="872"/>
    </location>
    <ligand>
        <name>Ca(2+)</name>
        <dbReference type="ChEBI" id="CHEBI:29108"/>
        <label>2</label>
    </ligand>
</feature>
<feature type="binding site" evidence="5">
    <location>
        <position position="879"/>
    </location>
    <ligand>
        <name>Ca(2+)</name>
        <dbReference type="ChEBI" id="CHEBI:29108"/>
        <label>2</label>
    </ligand>
</feature>
<feature type="glycosylation site" description="N-linked (GlcNAc...) asparagine" evidence="3">
    <location>
        <position position="100"/>
    </location>
</feature>
<feature type="glycosylation site" description="N-linked (GlcNAc...) asparagine" evidence="3">
    <location>
        <position position="348"/>
    </location>
</feature>
<feature type="glycosylation site" description="N-linked (GlcNAc...) asparagine" evidence="3">
    <location>
        <position position="455"/>
    </location>
</feature>
<feature type="glycosylation site" description="N-linked (GlcNAc...) asparagine" evidence="3">
    <location>
        <position position="537"/>
    </location>
</feature>
<feature type="disulfide bond" evidence="4">
    <location>
        <begin position="124"/>
        <end position="1131"/>
    </location>
</feature>
<feature type="disulfide bond" description="Interchain (with C-167 in DUOXA2)" evidence="4">
    <location>
        <position position="568"/>
    </location>
</feature>
<feature type="disulfide bond" description="Interchain (with C-233 in DUOXA2)" evidence="4">
    <location>
        <position position="582"/>
    </location>
</feature>
<feature type="splice variant" id="VSP_017264" description="In isoform 2." evidence="10">
    <location>
        <begin position="1"/>
        <end position="1061"/>
    </location>
</feature>
<feature type="sequence conflict" description="In Ref. 2; AAN39340." evidence="11" ref="2">
    <original>V</original>
    <variation>A</variation>
    <location>
        <position position="1243"/>
    </location>
</feature>
<feature type="sequence conflict" description="In Ref. 2; AAN39340." evidence="11" ref="2">
    <original>V</original>
    <variation>A</variation>
    <location>
        <position position="1246"/>
    </location>
</feature>
<feature type="sequence conflict" description="In Ref. 2; AAN39340." evidence="11" ref="2">
    <original>G</original>
    <variation>D</variation>
    <location>
        <position position="1409"/>
    </location>
</feature>
<dbReference type="EC" id="1.11.1.-"/>
<dbReference type="EC" id="1.6.3.1"/>
<dbReference type="EMBL" id="AF237962">
    <property type="protein sequence ID" value="AAG21895.1"/>
    <property type="molecule type" value="mRNA"/>
</dbReference>
<dbReference type="EMBL" id="AF547268">
    <property type="protein sequence ID" value="AAN39340.1"/>
    <property type="status" value="ALT_INIT"/>
    <property type="molecule type" value="mRNA"/>
</dbReference>
<dbReference type="RefSeq" id="NP_077055.1">
    <property type="nucleotide sequence ID" value="NM_024141.1"/>
</dbReference>
<dbReference type="SMR" id="Q9ES45"/>
<dbReference type="FunCoup" id="Q9ES45">
    <property type="interactions" value="14"/>
</dbReference>
<dbReference type="STRING" id="10116.ENSRNOP00000023939"/>
<dbReference type="PeroxiBase" id="3971">
    <property type="entry name" value="RnoDuOx02-B"/>
</dbReference>
<dbReference type="PeroxiBase" id="3972">
    <property type="entry name" value="RnoDuOx02-A"/>
</dbReference>
<dbReference type="GlyCosmos" id="Q9ES45">
    <property type="glycosylation" value="4 sites, No reported glycans"/>
</dbReference>
<dbReference type="GlyGen" id="Q9ES45">
    <property type="glycosylation" value="5 sites"/>
</dbReference>
<dbReference type="iPTMnet" id="Q9ES45"/>
<dbReference type="PhosphoSitePlus" id="Q9ES45"/>
<dbReference type="PaxDb" id="10116-ENSRNOP00000023939"/>
<dbReference type="GeneID" id="79107"/>
<dbReference type="KEGG" id="rno:79107"/>
<dbReference type="UCSC" id="RGD:628761">
    <molecule id="Q9ES45-1"/>
    <property type="organism name" value="rat"/>
</dbReference>
<dbReference type="AGR" id="RGD:628761"/>
<dbReference type="CTD" id="50506"/>
<dbReference type="RGD" id="628761">
    <property type="gene designation" value="Duox2"/>
</dbReference>
<dbReference type="eggNOG" id="KOG0039">
    <property type="taxonomic scope" value="Eukaryota"/>
</dbReference>
<dbReference type="InParanoid" id="Q9ES45"/>
<dbReference type="PhylomeDB" id="Q9ES45"/>
<dbReference type="Reactome" id="R-RNO-209968">
    <property type="pathway name" value="Thyroxine biosynthesis"/>
</dbReference>
<dbReference type="UniPathway" id="UPA00194"/>
<dbReference type="PRO" id="PR:Q9ES45"/>
<dbReference type="Proteomes" id="UP000002494">
    <property type="component" value="Unplaced"/>
</dbReference>
<dbReference type="GO" id="GO:0070161">
    <property type="term" value="C:anchoring junction"/>
    <property type="evidence" value="ECO:0007669"/>
    <property type="project" value="UniProtKB-SubCell"/>
</dbReference>
<dbReference type="GO" id="GO:0045177">
    <property type="term" value="C:apical part of cell"/>
    <property type="evidence" value="ECO:0000250"/>
    <property type="project" value="UniProtKB"/>
</dbReference>
<dbReference type="GO" id="GO:0016324">
    <property type="term" value="C:apical plasma membrane"/>
    <property type="evidence" value="ECO:0007669"/>
    <property type="project" value="UniProtKB-SubCell"/>
</dbReference>
<dbReference type="GO" id="GO:0031252">
    <property type="term" value="C:cell leading edge"/>
    <property type="evidence" value="ECO:0000266"/>
    <property type="project" value="RGD"/>
</dbReference>
<dbReference type="GO" id="GO:0009986">
    <property type="term" value="C:cell surface"/>
    <property type="evidence" value="ECO:0000266"/>
    <property type="project" value="RGD"/>
</dbReference>
<dbReference type="GO" id="GO:0005829">
    <property type="term" value="C:cytosol"/>
    <property type="evidence" value="ECO:0000250"/>
    <property type="project" value="UniProtKB"/>
</dbReference>
<dbReference type="GO" id="GO:0005783">
    <property type="term" value="C:endoplasmic reticulum"/>
    <property type="evidence" value="ECO:0000250"/>
    <property type="project" value="UniProtKB"/>
</dbReference>
<dbReference type="GO" id="GO:0043020">
    <property type="term" value="C:NADPH oxidase complex"/>
    <property type="evidence" value="ECO:0000318"/>
    <property type="project" value="GO_Central"/>
</dbReference>
<dbReference type="GO" id="GO:0005886">
    <property type="term" value="C:plasma membrane"/>
    <property type="evidence" value="ECO:0000250"/>
    <property type="project" value="UniProtKB"/>
</dbReference>
<dbReference type="GO" id="GO:0005509">
    <property type="term" value="F:calcium ion binding"/>
    <property type="evidence" value="ECO:0000266"/>
    <property type="project" value="RGD"/>
</dbReference>
<dbReference type="GO" id="GO:0020037">
    <property type="term" value="F:heme binding"/>
    <property type="evidence" value="ECO:0007669"/>
    <property type="project" value="InterPro"/>
</dbReference>
<dbReference type="GO" id="GO:0016174">
    <property type="term" value="F:NAD(P)H oxidase H2O2-forming activity"/>
    <property type="evidence" value="ECO:0000266"/>
    <property type="project" value="RGD"/>
</dbReference>
<dbReference type="GO" id="GO:0106293">
    <property type="term" value="F:NADH oxidase H202-forming activity"/>
    <property type="evidence" value="ECO:0007669"/>
    <property type="project" value="RHEA"/>
</dbReference>
<dbReference type="GO" id="GO:0106294">
    <property type="term" value="F:NADPH oxidase H202-forming activity"/>
    <property type="evidence" value="ECO:0007669"/>
    <property type="project" value="RHEA"/>
</dbReference>
<dbReference type="GO" id="GO:0004601">
    <property type="term" value="F:peroxidase activity"/>
    <property type="evidence" value="ECO:0007669"/>
    <property type="project" value="UniProtKB-KW"/>
</dbReference>
<dbReference type="GO" id="GO:0016175">
    <property type="term" value="F:superoxide-generating NAD(P)H oxidase activity"/>
    <property type="evidence" value="ECO:0000318"/>
    <property type="project" value="GO_Central"/>
</dbReference>
<dbReference type="GO" id="GO:0048855">
    <property type="term" value="P:adenohypophysis morphogenesis"/>
    <property type="evidence" value="ECO:0000266"/>
    <property type="project" value="RGD"/>
</dbReference>
<dbReference type="GO" id="GO:0030282">
    <property type="term" value="P:bone mineralization"/>
    <property type="evidence" value="ECO:0000266"/>
    <property type="project" value="RGD"/>
</dbReference>
<dbReference type="GO" id="GO:0042335">
    <property type="term" value="P:cuticle development"/>
    <property type="evidence" value="ECO:0000250"/>
    <property type="project" value="UniProtKB"/>
</dbReference>
<dbReference type="GO" id="GO:0019221">
    <property type="term" value="P:cytokine-mediated signaling pathway"/>
    <property type="evidence" value="ECO:0000250"/>
    <property type="project" value="UniProtKB"/>
</dbReference>
<dbReference type="GO" id="GO:0006952">
    <property type="term" value="P:defense response"/>
    <property type="evidence" value="ECO:0000318"/>
    <property type="project" value="GO_Central"/>
</dbReference>
<dbReference type="GO" id="GO:0009566">
    <property type="term" value="P:fertilization"/>
    <property type="evidence" value="ECO:0000266"/>
    <property type="project" value="RGD"/>
</dbReference>
<dbReference type="GO" id="GO:0042446">
    <property type="term" value="P:hormone biosynthetic process"/>
    <property type="evidence" value="ECO:0007669"/>
    <property type="project" value="UniProtKB-KW"/>
</dbReference>
<dbReference type="GO" id="GO:0042445">
    <property type="term" value="P:hormone metabolic process"/>
    <property type="evidence" value="ECO:0000266"/>
    <property type="project" value="RGD"/>
</dbReference>
<dbReference type="GO" id="GO:0050665">
    <property type="term" value="P:hydrogen peroxide biosynthetic process"/>
    <property type="evidence" value="ECO:0000266"/>
    <property type="project" value="RGD"/>
</dbReference>
<dbReference type="GO" id="GO:0042744">
    <property type="term" value="P:hydrogen peroxide catabolic process"/>
    <property type="evidence" value="ECO:0007669"/>
    <property type="project" value="UniProtKB-KW"/>
</dbReference>
<dbReference type="GO" id="GO:0048839">
    <property type="term" value="P:inner ear development"/>
    <property type="evidence" value="ECO:0000266"/>
    <property type="project" value="RGD"/>
</dbReference>
<dbReference type="GO" id="GO:0035264">
    <property type="term" value="P:multicellular organism growth"/>
    <property type="evidence" value="ECO:0000266"/>
    <property type="project" value="RGD"/>
</dbReference>
<dbReference type="GO" id="GO:2000147">
    <property type="term" value="P:positive regulation of cell motility"/>
    <property type="evidence" value="ECO:0000266"/>
    <property type="project" value="RGD"/>
</dbReference>
<dbReference type="GO" id="GO:0090303">
    <property type="term" value="P:positive regulation of wound healing"/>
    <property type="evidence" value="ECO:0000266"/>
    <property type="project" value="RGD"/>
</dbReference>
<dbReference type="GO" id="GO:0051591">
    <property type="term" value="P:response to cAMP"/>
    <property type="evidence" value="ECO:0000250"/>
    <property type="project" value="UniProtKB"/>
</dbReference>
<dbReference type="GO" id="GO:0006979">
    <property type="term" value="P:response to oxidative stress"/>
    <property type="evidence" value="ECO:0007669"/>
    <property type="project" value="InterPro"/>
</dbReference>
<dbReference type="GO" id="GO:0009615">
    <property type="term" value="P:response to virus"/>
    <property type="evidence" value="ECO:0000266"/>
    <property type="project" value="RGD"/>
</dbReference>
<dbReference type="GO" id="GO:0042554">
    <property type="term" value="P:superoxide anion generation"/>
    <property type="evidence" value="ECO:0000266"/>
    <property type="project" value="RGD"/>
</dbReference>
<dbReference type="GO" id="GO:0030878">
    <property type="term" value="P:thyroid gland development"/>
    <property type="evidence" value="ECO:0000266"/>
    <property type="project" value="RGD"/>
</dbReference>
<dbReference type="GO" id="GO:0006590">
    <property type="term" value="P:thyroid hormone generation"/>
    <property type="evidence" value="ECO:0000304"/>
    <property type="project" value="RGD"/>
</dbReference>
<dbReference type="GO" id="GO:0042403">
    <property type="term" value="P:thyroid hormone metabolic process"/>
    <property type="evidence" value="ECO:0000266"/>
    <property type="project" value="RGD"/>
</dbReference>
<dbReference type="CDD" id="cd09820">
    <property type="entry name" value="dual_peroxidase_like"/>
    <property type="match status" value="1"/>
</dbReference>
<dbReference type="CDD" id="cd00051">
    <property type="entry name" value="EFh"/>
    <property type="match status" value="2"/>
</dbReference>
<dbReference type="CDD" id="cd06186">
    <property type="entry name" value="NOX_Duox_like_FAD_NADP"/>
    <property type="match status" value="1"/>
</dbReference>
<dbReference type="FunFam" id="2.40.30.10:FF:000043">
    <property type="entry name" value="dual oxidase 1"/>
    <property type="match status" value="1"/>
</dbReference>
<dbReference type="FunFam" id="1.10.640.10:FF:000004">
    <property type="entry name" value="Dual oxidase 2"/>
    <property type="match status" value="1"/>
</dbReference>
<dbReference type="FunFam" id="3.40.50.80:FF:000006">
    <property type="entry name" value="Dual oxidase 2"/>
    <property type="match status" value="1"/>
</dbReference>
<dbReference type="FunFam" id="1.10.238.10:FF:000095">
    <property type="entry name" value="dual oxidase 2"/>
    <property type="match status" value="1"/>
</dbReference>
<dbReference type="Gene3D" id="1.10.238.10">
    <property type="entry name" value="EF-hand"/>
    <property type="match status" value="1"/>
</dbReference>
<dbReference type="Gene3D" id="1.10.640.10">
    <property type="entry name" value="Haem peroxidase domain superfamily, animal type"/>
    <property type="match status" value="1"/>
</dbReference>
<dbReference type="Gene3D" id="3.40.50.80">
    <property type="entry name" value="Nucleotide-binding domain of ferredoxin-NADP reductase (FNR) module"/>
    <property type="match status" value="1"/>
</dbReference>
<dbReference type="Gene3D" id="2.40.30.10">
    <property type="entry name" value="Translation factors"/>
    <property type="match status" value="1"/>
</dbReference>
<dbReference type="InterPro" id="IPR034821">
    <property type="entry name" value="DUOX_peroxidase"/>
</dbReference>
<dbReference type="InterPro" id="IPR011992">
    <property type="entry name" value="EF-hand-dom_pair"/>
</dbReference>
<dbReference type="InterPro" id="IPR018247">
    <property type="entry name" value="EF_Hand_1_Ca_BS"/>
</dbReference>
<dbReference type="InterPro" id="IPR002048">
    <property type="entry name" value="EF_hand_dom"/>
</dbReference>
<dbReference type="InterPro" id="IPR013112">
    <property type="entry name" value="FAD-bd_8"/>
</dbReference>
<dbReference type="InterPro" id="IPR017927">
    <property type="entry name" value="FAD-bd_FR_type"/>
</dbReference>
<dbReference type="InterPro" id="IPR013130">
    <property type="entry name" value="Fe3_Rdtase_TM_dom"/>
</dbReference>
<dbReference type="InterPro" id="IPR013121">
    <property type="entry name" value="Fe_red_NAD-bd_6"/>
</dbReference>
<dbReference type="InterPro" id="IPR039261">
    <property type="entry name" value="FNR_nucleotide-bd"/>
</dbReference>
<dbReference type="InterPro" id="IPR019791">
    <property type="entry name" value="Haem_peroxidase_animal"/>
</dbReference>
<dbReference type="InterPro" id="IPR010255">
    <property type="entry name" value="Haem_peroxidase_sf"/>
</dbReference>
<dbReference type="InterPro" id="IPR037120">
    <property type="entry name" value="Haem_peroxidase_sf_animal"/>
</dbReference>
<dbReference type="InterPro" id="IPR050369">
    <property type="entry name" value="RBOH/FRE"/>
</dbReference>
<dbReference type="InterPro" id="IPR017938">
    <property type="entry name" value="Riboflavin_synthase-like_b-brl"/>
</dbReference>
<dbReference type="PANTHER" id="PTHR11972:SF67">
    <property type="entry name" value="DUAL OXIDASE 2"/>
    <property type="match status" value="1"/>
</dbReference>
<dbReference type="PANTHER" id="PTHR11972">
    <property type="entry name" value="NADPH OXIDASE"/>
    <property type="match status" value="1"/>
</dbReference>
<dbReference type="Pfam" id="PF03098">
    <property type="entry name" value="An_peroxidase"/>
    <property type="match status" value="1"/>
</dbReference>
<dbReference type="Pfam" id="PF00036">
    <property type="entry name" value="EF-hand_1"/>
    <property type="match status" value="2"/>
</dbReference>
<dbReference type="Pfam" id="PF08022">
    <property type="entry name" value="FAD_binding_8"/>
    <property type="match status" value="1"/>
</dbReference>
<dbReference type="Pfam" id="PF01794">
    <property type="entry name" value="Ferric_reduct"/>
    <property type="match status" value="1"/>
</dbReference>
<dbReference type="Pfam" id="PF08030">
    <property type="entry name" value="NAD_binding_6"/>
    <property type="match status" value="1"/>
</dbReference>
<dbReference type="PRINTS" id="PR00457">
    <property type="entry name" value="ANPEROXIDASE"/>
</dbReference>
<dbReference type="SFLD" id="SFLDS00052">
    <property type="entry name" value="Ferric_Reductase_Domain"/>
    <property type="match status" value="1"/>
</dbReference>
<dbReference type="SFLD" id="SFLDG01168">
    <property type="entry name" value="Ferric_reductase_subgroup_(FRE"/>
    <property type="match status" value="1"/>
</dbReference>
<dbReference type="SFLD" id="SFLDG01169">
    <property type="entry name" value="NADPH_oxidase_subgroup_(NOX)"/>
    <property type="match status" value="1"/>
</dbReference>
<dbReference type="SMART" id="SM00054">
    <property type="entry name" value="EFh"/>
    <property type="match status" value="2"/>
</dbReference>
<dbReference type="SUPFAM" id="SSF47473">
    <property type="entry name" value="EF-hand"/>
    <property type="match status" value="1"/>
</dbReference>
<dbReference type="SUPFAM" id="SSF52343">
    <property type="entry name" value="Ferredoxin reductase-like, C-terminal NADP-linked domain"/>
    <property type="match status" value="1"/>
</dbReference>
<dbReference type="SUPFAM" id="SSF48113">
    <property type="entry name" value="Heme-dependent peroxidases"/>
    <property type="match status" value="1"/>
</dbReference>
<dbReference type="SUPFAM" id="SSF63380">
    <property type="entry name" value="Riboflavin synthase domain-like"/>
    <property type="match status" value="1"/>
</dbReference>
<dbReference type="PROSITE" id="PS00018">
    <property type="entry name" value="EF_HAND_1"/>
    <property type="match status" value="2"/>
</dbReference>
<dbReference type="PROSITE" id="PS50222">
    <property type="entry name" value="EF_HAND_2"/>
    <property type="match status" value="3"/>
</dbReference>
<dbReference type="PROSITE" id="PS51384">
    <property type="entry name" value="FAD_FR"/>
    <property type="match status" value="1"/>
</dbReference>
<dbReference type="PROSITE" id="PS50292">
    <property type="entry name" value="PEROXIDASE_3"/>
    <property type="match status" value="1"/>
</dbReference>
<accession>Q9ES45</accession>
<accession>Q811Y4</accession>